<keyword id="KW-0150">Chloroplast</keyword>
<keyword id="KW-0472">Membrane</keyword>
<keyword id="KW-0520">NAD</keyword>
<keyword id="KW-0521">NADP</keyword>
<keyword id="KW-0934">Plastid</keyword>
<keyword id="KW-0618">Plastoquinone</keyword>
<keyword id="KW-0874">Quinone</keyword>
<keyword id="KW-1185">Reference proteome</keyword>
<keyword id="KW-0793">Thylakoid</keyword>
<keyword id="KW-1278">Translocase</keyword>
<keyword id="KW-0812">Transmembrane</keyword>
<keyword id="KW-1133">Transmembrane helix</keyword>
<accession>Q70XV9</accession>
<geneLocation type="chloroplast"/>
<protein>
    <recommendedName>
        <fullName evidence="1">NAD(P)H-quinone oxidoreductase subunit 1, chloroplastic</fullName>
        <ecNumber evidence="1">7.1.1.-</ecNumber>
    </recommendedName>
    <alternativeName>
        <fullName evidence="1">NAD(P)H dehydrogenase subunit 1</fullName>
        <shortName evidence="1">NDH subunit 1</shortName>
    </alternativeName>
    <alternativeName>
        <fullName evidence="1">NADH-plastoquinone oxidoreductase subunit 1</fullName>
    </alternativeName>
</protein>
<comment type="function">
    <text evidence="1">NDH shuttles electrons from NAD(P)H:plastoquinone, via FMN and iron-sulfur (Fe-S) centers, to quinones in the photosynthetic chain and possibly in a chloroplast respiratory chain. The immediate electron acceptor for the enzyme in this species is believed to be plastoquinone. Couples the redox reaction to proton translocation, and thus conserves the redox energy in a proton gradient.</text>
</comment>
<comment type="catalytic activity">
    <reaction evidence="1">
        <text>a plastoquinone + NADH + (n+1) H(+)(in) = a plastoquinol + NAD(+) + n H(+)(out)</text>
        <dbReference type="Rhea" id="RHEA:42608"/>
        <dbReference type="Rhea" id="RHEA-COMP:9561"/>
        <dbReference type="Rhea" id="RHEA-COMP:9562"/>
        <dbReference type="ChEBI" id="CHEBI:15378"/>
        <dbReference type="ChEBI" id="CHEBI:17757"/>
        <dbReference type="ChEBI" id="CHEBI:57540"/>
        <dbReference type="ChEBI" id="CHEBI:57945"/>
        <dbReference type="ChEBI" id="CHEBI:62192"/>
    </reaction>
</comment>
<comment type="catalytic activity">
    <reaction evidence="1">
        <text>a plastoquinone + NADPH + (n+1) H(+)(in) = a plastoquinol + NADP(+) + n H(+)(out)</text>
        <dbReference type="Rhea" id="RHEA:42612"/>
        <dbReference type="Rhea" id="RHEA-COMP:9561"/>
        <dbReference type="Rhea" id="RHEA-COMP:9562"/>
        <dbReference type="ChEBI" id="CHEBI:15378"/>
        <dbReference type="ChEBI" id="CHEBI:17757"/>
        <dbReference type="ChEBI" id="CHEBI:57783"/>
        <dbReference type="ChEBI" id="CHEBI:58349"/>
        <dbReference type="ChEBI" id="CHEBI:62192"/>
    </reaction>
</comment>
<comment type="subunit">
    <text evidence="1">NDH is composed of at least 16 different subunits, 5 of which are encoded in the nucleus.</text>
</comment>
<comment type="subcellular location">
    <subcellularLocation>
        <location evidence="1">Plastid</location>
        <location evidence="1">Chloroplast thylakoid membrane</location>
        <topology evidence="1">Multi-pass membrane protein</topology>
    </subcellularLocation>
</comment>
<comment type="similarity">
    <text evidence="1">Belongs to the complex I subunit 1 family.</text>
</comment>
<reference key="1">
    <citation type="journal article" date="2003" name="Mol. Biol. Evol.">
        <title>Analysis of the Amborella trichopoda chloroplast genome sequence suggests that Amborella is not a basal angiosperm.</title>
        <authorList>
            <person name="Goremykin V.V."/>
            <person name="Hirsch-Ernst K.I."/>
            <person name="Wolfl S."/>
            <person name="Hellwig F.H."/>
        </authorList>
    </citation>
    <scope>NUCLEOTIDE SEQUENCE [LARGE SCALE GENOMIC DNA]</scope>
</reference>
<gene>
    <name evidence="1" type="primary">ndhA</name>
</gene>
<name>NU1C_AMBTC</name>
<sequence length="363" mass="40193">MIIDTTEVQAINSFSRLESSKEVYGLIWLFIPIFTPVSGITIGVLVIVWLEREISAGIQQRIGPEYAGPLGILQAIADGTKLLFKEDLLPSRGDIRLFSIGPSVVVISILLSHLVIPFGYRLVLADLSIGVSLWIAISSIAPIGLLMSGYASNNKYSFSGGLRAAAQSISYEIPLTLCVLSISLLSNSSSTVDIVEAQYKYGFWGWNLWRQPIGFLAFLISSLAECERLPFDLPEAEEELVAGYQTEYSGIKFGLFYLASYLNLLVSSLFVTVLYLGGWNLSIPYIAIPELFRINRIGGVFGTTISIFFTLAKAYLFLFIPITTRWTLPRMRMDQLLNLGWKFLLPIALGNLLLTTSSQLFSL</sequence>
<feature type="chain" id="PRO_0000240015" description="NAD(P)H-quinone oxidoreductase subunit 1, chloroplastic">
    <location>
        <begin position="1"/>
        <end position="363"/>
    </location>
</feature>
<feature type="transmembrane region" description="Helical" evidence="1">
    <location>
        <begin position="27"/>
        <end position="47"/>
    </location>
</feature>
<feature type="transmembrane region" description="Helical" evidence="1">
    <location>
        <begin position="98"/>
        <end position="118"/>
    </location>
</feature>
<feature type="transmembrane region" description="Helical" evidence="1">
    <location>
        <begin position="127"/>
        <end position="147"/>
    </location>
</feature>
<feature type="transmembrane region" description="Helical" evidence="1">
    <location>
        <begin position="248"/>
        <end position="268"/>
    </location>
</feature>
<feature type="transmembrane region" description="Helical" evidence="1">
    <location>
        <begin position="300"/>
        <end position="320"/>
    </location>
</feature>
<feature type="transmembrane region" description="Helical" evidence="1">
    <location>
        <begin position="336"/>
        <end position="356"/>
    </location>
</feature>
<dbReference type="EC" id="7.1.1.-" evidence="1"/>
<dbReference type="EMBL" id="AJ506156">
    <property type="protein sequence ID" value="CAD45161.1"/>
    <property type="molecule type" value="Genomic_DNA"/>
</dbReference>
<dbReference type="RefSeq" id="NP_904154.1">
    <property type="nucleotide sequence ID" value="NC_005086.1"/>
</dbReference>
<dbReference type="SMR" id="Q70XV9"/>
<dbReference type="STRING" id="13333.Q70XV9"/>
<dbReference type="GeneID" id="2546599"/>
<dbReference type="KEGG" id="atr:2546599"/>
<dbReference type="OrthoDB" id="531329at2759"/>
<dbReference type="Proteomes" id="UP000017836">
    <property type="component" value="Chloroplast"/>
</dbReference>
<dbReference type="GO" id="GO:0009535">
    <property type="term" value="C:chloroplast thylakoid membrane"/>
    <property type="evidence" value="ECO:0007669"/>
    <property type="project" value="UniProtKB-SubCell"/>
</dbReference>
<dbReference type="GO" id="GO:0016655">
    <property type="term" value="F:oxidoreductase activity, acting on NAD(P)H, quinone or similar compound as acceptor"/>
    <property type="evidence" value="ECO:0007669"/>
    <property type="project" value="UniProtKB-UniRule"/>
</dbReference>
<dbReference type="GO" id="GO:0048038">
    <property type="term" value="F:quinone binding"/>
    <property type="evidence" value="ECO:0007669"/>
    <property type="project" value="UniProtKB-KW"/>
</dbReference>
<dbReference type="GO" id="GO:0009060">
    <property type="term" value="P:aerobic respiration"/>
    <property type="evidence" value="ECO:0000318"/>
    <property type="project" value="GO_Central"/>
</dbReference>
<dbReference type="GO" id="GO:0019684">
    <property type="term" value="P:photosynthesis, light reaction"/>
    <property type="evidence" value="ECO:0007669"/>
    <property type="project" value="UniProtKB-UniRule"/>
</dbReference>
<dbReference type="HAMAP" id="MF_01350">
    <property type="entry name" value="NDH1_NuoH"/>
    <property type="match status" value="1"/>
</dbReference>
<dbReference type="InterPro" id="IPR001694">
    <property type="entry name" value="NADH_UbQ_OxRdtase_su1/FPO"/>
</dbReference>
<dbReference type="InterPro" id="IPR018086">
    <property type="entry name" value="NADH_UbQ_OxRdtase_su1_CS"/>
</dbReference>
<dbReference type="NCBIfam" id="NF004741">
    <property type="entry name" value="PRK06076.1-2"/>
    <property type="match status" value="1"/>
</dbReference>
<dbReference type="PANTHER" id="PTHR11432">
    <property type="entry name" value="NADH DEHYDROGENASE SUBUNIT 1"/>
    <property type="match status" value="1"/>
</dbReference>
<dbReference type="PANTHER" id="PTHR11432:SF3">
    <property type="entry name" value="NADH-UBIQUINONE OXIDOREDUCTASE CHAIN 1"/>
    <property type="match status" value="1"/>
</dbReference>
<dbReference type="Pfam" id="PF00146">
    <property type="entry name" value="NADHdh"/>
    <property type="match status" value="1"/>
</dbReference>
<dbReference type="PROSITE" id="PS00667">
    <property type="entry name" value="COMPLEX1_ND1_1"/>
    <property type="match status" value="1"/>
</dbReference>
<dbReference type="PROSITE" id="PS00668">
    <property type="entry name" value="COMPLEX1_ND1_2"/>
    <property type="match status" value="1"/>
</dbReference>
<organism>
    <name type="scientific">Amborella trichopoda</name>
    <dbReference type="NCBI Taxonomy" id="13333"/>
    <lineage>
        <taxon>Eukaryota</taxon>
        <taxon>Viridiplantae</taxon>
        <taxon>Streptophyta</taxon>
        <taxon>Embryophyta</taxon>
        <taxon>Tracheophyta</taxon>
        <taxon>Spermatophyta</taxon>
        <taxon>Magnoliopsida</taxon>
        <taxon>Amborellales</taxon>
        <taxon>Amborellaceae</taxon>
        <taxon>Amborella</taxon>
    </lineage>
</organism>
<proteinExistence type="inferred from homology"/>
<evidence type="ECO:0000255" key="1">
    <source>
        <dbReference type="HAMAP-Rule" id="MF_01350"/>
    </source>
</evidence>